<name>RL14_NATPD</name>
<reference key="1">
    <citation type="journal article" date="2005" name="Genome Res.">
        <title>Living with two extremes: conclusions from the genome sequence of Natronomonas pharaonis.</title>
        <authorList>
            <person name="Falb M."/>
            <person name="Pfeiffer F."/>
            <person name="Palm P."/>
            <person name="Rodewald K."/>
            <person name="Hickmann V."/>
            <person name="Tittor J."/>
            <person name="Oesterhelt D."/>
        </authorList>
    </citation>
    <scope>NUCLEOTIDE SEQUENCE [LARGE SCALE GENOMIC DNA]</scope>
    <source>
        <strain>ATCC 35678 / DSM 2160 / CIP 103997 / JCM 8858 / NBRC 14720 / NCIMB 2260 / Gabara</strain>
    </source>
</reference>
<keyword id="KW-1185">Reference proteome</keyword>
<keyword id="KW-0687">Ribonucleoprotein</keyword>
<keyword id="KW-0689">Ribosomal protein</keyword>
<keyword id="KW-0694">RNA-binding</keyword>
<keyword id="KW-0699">rRNA-binding</keyword>
<proteinExistence type="inferred from homology"/>
<comment type="function">
    <text evidence="1">Binds to 23S rRNA. Forms part of two intersubunit bridges in the 70S ribosome.</text>
</comment>
<comment type="subunit">
    <text evidence="1">Part of the 50S ribosomal subunit. Forms a cluster with proteins L3 and L24e, part of which may contact the 16S rRNA in 2 intersubunit bridges.</text>
</comment>
<comment type="similarity">
    <text evidence="1">Belongs to the universal ribosomal protein uL14 family.</text>
</comment>
<accession>Q3IMX8</accession>
<organism>
    <name type="scientific">Natronomonas pharaonis (strain ATCC 35678 / DSM 2160 / CIP 103997 / JCM 8858 / NBRC 14720 / NCIMB 2260 / Gabara)</name>
    <name type="common">Halobacterium pharaonis</name>
    <dbReference type="NCBI Taxonomy" id="348780"/>
    <lineage>
        <taxon>Archaea</taxon>
        <taxon>Methanobacteriati</taxon>
        <taxon>Methanobacteriota</taxon>
        <taxon>Stenosarchaea group</taxon>
        <taxon>Halobacteria</taxon>
        <taxon>Halobacteriales</taxon>
        <taxon>Haloarculaceae</taxon>
        <taxon>Natronomonas</taxon>
    </lineage>
</organism>
<sequence>MEALNADVTQGLEKGSLITCADNTGARELKVTSISGYSGTKNRHPKAGLGDKITVSVTKGTPEMRRQVLEAVVIRQRKPIRRPDGTRVKFEDNAAVIVDENEDPRGTELKGPIAREVAERFGSIASTATIIV</sequence>
<feature type="chain" id="PRO_0000266609" description="Large ribosomal subunit protein uL14">
    <location>
        <begin position="1"/>
        <end position="132"/>
    </location>
</feature>
<evidence type="ECO:0000255" key="1">
    <source>
        <dbReference type="HAMAP-Rule" id="MF_01367"/>
    </source>
</evidence>
<evidence type="ECO:0000305" key="2"/>
<protein>
    <recommendedName>
        <fullName evidence="1">Large ribosomal subunit protein uL14</fullName>
    </recommendedName>
    <alternativeName>
        <fullName evidence="2">50S ribosomal protein L14</fullName>
    </alternativeName>
</protein>
<gene>
    <name evidence="1" type="primary">rpl14</name>
    <name type="ordered locus">NP_4874A</name>
</gene>
<dbReference type="EMBL" id="CR936257">
    <property type="protein sequence ID" value="CAI50528.1"/>
    <property type="molecule type" value="Genomic_DNA"/>
</dbReference>
<dbReference type="RefSeq" id="WP_011324140.1">
    <property type="nucleotide sequence ID" value="NC_007426.1"/>
</dbReference>
<dbReference type="SMR" id="Q3IMX8"/>
<dbReference type="STRING" id="348780.NP_4874A"/>
<dbReference type="EnsemblBacteria" id="CAI50528">
    <property type="protein sequence ID" value="CAI50528"/>
    <property type="gene ID" value="NP_4874A"/>
</dbReference>
<dbReference type="GeneID" id="3703124"/>
<dbReference type="KEGG" id="nph:NP_4874A"/>
<dbReference type="eggNOG" id="arCOG04095">
    <property type="taxonomic scope" value="Archaea"/>
</dbReference>
<dbReference type="HOGENOM" id="CLU_095071_3_0_2"/>
<dbReference type="OrthoDB" id="23569at2157"/>
<dbReference type="Proteomes" id="UP000002698">
    <property type="component" value="Chromosome"/>
</dbReference>
<dbReference type="GO" id="GO:0022625">
    <property type="term" value="C:cytosolic large ribosomal subunit"/>
    <property type="evidence" value="ECO:0007669"/>
    <property type="project" value="TreeGrafter"/>
</dbReference>
<dbReference type="GO" id="GO:0070180">
    <property type="term" value="F:large ribosomal subunit rRNA binding"/>
    <property type="evidence" value="ECO:0007669"/>
    <property type="project" value="TreeGrafter"/>
</dbReference>
<dbReference type="GO" id="GO:0003735">
    <property type="term" value="F:structural constituent of ribosome"/>
    <property type="evidence" value="ECO:0007669"/>
    <property type="project" value="InterPro"/>
</dbReference>
<dbReference type="GO" id="GO:0006412">
    <property type="term" value="P:translation"/>
    <property type="evidence" value="ECO:0007669"/>
    <property type="project" value="UniProtKB-UniRule"/>
</dbReference>
<dbReference type="CDD" id="cd00337">
    <property type="entry name" value="Ribosomal_uL14"/>
    <property type="match status" value="1"/>
</dbReference>
<dbReference type="FunFam" id="2.40.150.20:FF:000007">
    <property type="entry name" value="50S ribosomal protein L14"/>
    <property type="match status" value="1"/>
</dbReference>
<dbReference type="Gene3D" id="2.40.150.20">
    <property type="entry name" value="Ribosomal protein L14"/>
    <property type="match status" value="1"/>
</dbReference>
<dbReference type="HAMAP" id="MF_01367">
    <property type="entry name" value="Ribosomal_uL14"/>
    <property type="match status" value="1"/>
</dbReference>
<dbReference type="InterPro" id="IPR000218">
    <property type="entry name" value="Ribosomal_uL14"/>
</dbReference>
<dbReference type="InterPro" id="IPR019971">
    <property type="entry name" value="Ribosomal_uL14_arc"/>
</dbReference>
<dbReference type="InterPro" id="IPR019972">
    <property type="entry name" value="Ribosomal_uL14_CS"/>
</dbReference>
<dbReference type="InterPro" id="IPR036853">
    <property type="entry name" value="Ribosomal_uL14_sf"/>
</dbReference>
<dbReference type="NCBIfam" id="NF006344">
    <property type="entry name" value="PRK08571.1"/>
    <property type="match status" value="1"/>
</dbReference>
<dbReference type="NCBIfam" id="TIGR03673">
    <property type="entry name" value="uL14_arch"/>
    <property type="match status" value="1"/>
</dbReference>
<dbReference type="PANTHER" id="PTHR11761">
    <property type="entry name" value="50S/60S RIBOSOMAL PROTEIN L14/L23"/>
    <property type="match status" value="1"/>
</dbReference>
<dbReference type="PANTHER" id="PTHR11761:SF8">
    <property type="entry name" value="LARGE RIBOSOMAL SUBUNIT PROTEIN UL14"/>
    <property type="match status" value="1"/>
</dbReference>
<dbReference type="Pfam" id="PF00238">
    <property type="entry name" value="Ribosomal_L14"/>
    <property type="match status" value="1"/>
</dbReference>
<dbReference type="SMART" id="SM01374">
    <property type="entry name" value="Ribosomal_L14"/>
    <property type="match status" value="1"/>
</dbReference>
<dbReference type="SUPFAM" id="SSF50193">
    <property type="entry name" value="Ribosomal protein L14"/>
    <property type="match status" value="1"/>
</dbReference>
<dbReference type="PROSITE" id="PS00049">
    <property type="entry name" value="RIBOSOMAL_L14"/>
    <property type="match status" value="1"/>
</dbReference>